<sequence>MVNTPVPGLGSCASRGLIAAPASIIRSRPGCDHAGECIVVCVGVFRKDWVMTSPKQRPPLVPGVAQTFPVLPLRDIVVFPHMIVPLFVGREKSIRALEEVMRGDTYILLATQENASDDDPATDAIYRVGTLATVLQLLKLPDGTVKVLVEGVTRAQVVQYTDRADLYEAEAISLPDEVGDVVEAEALARSVVNEFENYVKLNKKVSPEVVGVVGQIEDHAKLADTIASHLAVKIPEKQAVLETVKVADRLEKVLGLMESEISVLQVEKRIRTRVKRQMEKTQREYYLNEQMKAIQKELGDEDGRDDLQELEDRIKRTKLTKEAREKATHELKKLRQMSPMSAEATVVRNYLDWLLSIPWGIKSKVKKDLPFAQSVLDSDHYGLDKVKERIVEYLAVQSRANKLAGPILCLVGPPGVGKTSLGRSIAKATGREFVRVSLGGVRDEAEIRGHRRTYIGSMPGKIIQSMRKAKKSNPLFLLDEIDKMGADFRGDPSAALLEVLDPEQNPTFNDHYLEVDYDLSNVMFVTTANTLNIPPALLDRMEVIRIAGYTEDEKAEISRKHLIPNALQKHGLSAKEWSIDDAALLQVIRRYTREAGVRNLEREISTLARKAVKELVISKKKSVKVTAKNLETFLGVPRFRYGEIEREDQVGVVTGLAWTEVGGELLTIEGVMMPGKGRMTVTGNLKEVMKESISAAASYVRSRSVDFGIEPPLFERRDIHVHVPEGATPKDGPSAGVAMATTIVSVLTGIPVRRDVAMTGEITLRGRVLPIGGLKEKLLAALRGGIKKVLIPEENAKDLADIPDNVKNALEIIPVSRMDEVLHHALLRHPEPISWTEQPVSGAVVPDEDAAGVVAH</sequence>
<gene>
    <name evidence="1" type="primary">lon</name>
    <name type="ordered locus">AZC_1610</name>
</gene>
<reference key="1">
    <citation type="submission" date="2007-04" db="EMBL/GenBank/DDBJ databases">
        <title>Complete genome sequence of the nitrogen-fixing bacterium Azorhizobium caulinodans ORS571.</title>
        <authorList>
            <person name="Lee K.B."/>
            <person name="Backer P.D."/>
            <person name="Aono T."/>
            <person name="Liu C.T."/>
            <person name="Suzuki S."/>
            <person name="Suzuki T."/>
            <person name="Kaneko T."/>
            <person name="Yamada M."/>
            <person name="Tabata S."/>
            <person name="Kupfer D.M."/>
            <person name="Najar F.Z."/>
            <person name="Wiley G.B."/>
            <person name="Roe B."/>
            <person name="Binnewies T."/>
            <person name="Ussery D."/>
            <person name="Vereecke D."/>
            <person name="Gevers D."/>
            <person name="Holsters M."/>
            <person name="Oyaizu H."/>
        </authorList>
    </citation>
    <scope>NUCLEOTIDE SEQUENCE [LARGE SCALE GENOMIC DNA]</scope>
    <source>
        <strain>ATCC 43989 / DSM 5975 / JCM 20966 / LMG 6465 / NBRC 14845 / NCIMB 13405 / ORS 571</strain>
    </source>
</reference>
<comment type="function">
    <text evidence="1">ATP-dependent serine protease that mediates the selective degradation of mutant and abnormal proteins as well as certain short-lived regulatory proteins. Required for cellular homeostasis and for survival from DNA damage and developmental changes induced by stress. Degrades polypeptides processively to yield small peptide fragments that are 5 to 10 amino acids long. Binds to DNA in a double-stranded, site-specific manner.</text>
</comment>
<comment type="catalytic activity">
    <reaction evidence="1">
        <text>Hydrolysis of proteins in presence of ATP.</text>
        <dbReference type="EC" id="3.4.21.53"/>
    </reaction>
</comment>
<comment type="subunit">
    <text evidence="1">Homohexamer. Organized in a ring with a central cavity.</text>
</comment>
<comment type="subcellular location">
    <subcellularLocation>
        <location evidence="1">Cytoplasm</location>
    </subcellularLocation>
</comment>
<comment type="induction">
    <text evidence="1">By heat shock.</text>
</comment>
<comment type="similarity">
    <text evidence="1">Belongs to the peptidase S16 family.</text>
</comment>
<dbReference type="EC" id="3.4.21.53" evidence="1"/>
<dbReference type="EMBL" id="AP009384">
    <property type="protein sequence ID" value="BAF87608.1"/>
    <property type="molecule type" value="Genomic_DNA"/>
</dbReference>
<dbReference type="SMR" id="A8HYF7"/>
<dbReference type="STRING" id="438753.AZC_1610"/>
<dbReference type="MEROPS" id="S16.001"/>
<dbReference type="KEGG" id="azc:AZC_1610"/>
<dbReference type="eggNOG" id="COG0466">
    <property type="taxonomic scope" value="Bacteria"/>
</dbReference>
<dbReference type="HOGENOM" id="CLU_004109_4_3_5"/>
<dbReference type="BRENDA" id="3.4.21.53">
    <property type="organism ID" value="609"/>
</dbReference>
<dbReference type="Proteomes" id="UP000000270">
    <property type="component" value="Chromosome"/>
</dbReference>
<dbReference type="GO" id="GO:0005737">
    <property type="term" value="C:cytoplasm"/>
    <property type="evidence" value="ECO:0007669"/>
    <property type="project" value="UniProtKB-SubCell"/>
</dbReference>
<dbReference type="GO" id="GO:0005524">
    <property type="term" value="F:ATP binding"/>
    <property type="evidence" value="ECO:0007669"/>
    <property type="project" value="UniProtKB-UniRule"/>
</dbReference>
<dbReference type="GO" id="GO:0016887">
    <property type="term" value="F:ATP hydrolysis activity"/>
    <property type="evidence" value="ECO:0007669"/>
    <property type="project" value="UniProtKB-UniRule"/>
</dbReference>
<dbReference type="GO" id="GO:0004176">
    <property type="term" value="F:ATP-dependent peptidase activity"/>
    <property type="evidence" value="ECO:0007669"/>
    <property type="project" value="UniProtKB-UniRule"/>
</dbReference>
<dbReference type="GO" id="GO:0043565">
    <property type="term" value="F:sequence-specific DNA binding"/>
    <property type="evidence" value="ECO:0007669"/>
    <property type="project" value="UniProtKB-UniRule"/>
</dbReference>
<dbReference type="GO" id="GO:0004252">
    <property type="term" value="F:serine-type endopeptidase activity"/>
    <property type="evidence" value="ECO:0007669"/>
    <property type="project" value="UniProtKB-UniRule"/>
</dbReference>
<dbReference type="GO" id="GO:0034605">
    <property type="term" value="P:cellular response to heat"/>
    <property type="evidence" value="ECO:0007669"/>
    <property type="project" value="UniProtKB-UniRule"/>
</dbReference>
<dbReference type="GO" id="GO:0006515">
    <property type="term" value="P:protein quality control for misfolded or incompletely synthesized proteins"/>
    <property type="evidence" value="ECO:0007669"/>
    <property type="project" value="UniProtKB-UniRule"/>
</dbReference>
<dbReference type="CDD" id="cd19500">
    <property type="entry name" value="RecA-like_Lon"/>
    <property type="match status" value="1"/>
</dbReference>
<dbReference type="FunFam" id="3.30.230.10:FF:000010">
    <property type="entry name" value="Lon protease"/>
    <property type="match status" value="1"/>
</dbReference>
<dbReference type="FunFam" id="1.20.5.5270:FF:000002">
    <property type="entry name" value="Lon protease homolog"/>
    <property type="match status" value="1"/>
</dbReference>
<dbReference type="FunFam" id="3.40.50.300:FF:000021">
    <property type="entry name" value="Lon protease homolog"/>
    <property type="match status" value="1"/>
</dbReference>
<dbReference type="Gene3D" id="1.10.8.60">
    <property type="match status" value="1"/>
</dbReference>
<dbReference type="Gene3D" id="1.20.5.5270">
    <property type="match status" value="1"/>
</dbReference>
<dbReference type="Gene3D" id="1.20.58.1480">
    <property type="match status" value="1"/>
</dbReference>
<dbReference type="Gene3D" id="3.30.230.10">
    <property type="match status" value="1"/>
</dbReference>
<dbReference type="Gene3D" id="2.30.130.40">
    <property type="entry name" value="LON domain-like"/>
    <property type="match status" value="1"/>
</dbReference>
<dbReference type="Gene3D" id="3.40.50.300">
    <property type="entry name" value="P-loop containing nucleotide triphosphate hydrolases"/>
    <property type="match status" value="1"/>
</dbReference>
<dbReference type="HAMAP" id="MF_01973">
    <property type="entry name" value="lon_bact"/>
    <property type="match status" value="1"/>
</dbReference>
<dbReference type="InterPro" id="IPR003593">
    <property type="entry name" value="AAA+_ATPase"/>
</dbReference>
<dbReference type="InterPro" id="IPR003959">
    <property type="entry name" value="ATPase_AAA_core"/>
</dbReference>
<dbReference type="InterPro" id="IPR027543">
    <property type="entry name" value="Lon_bac"/>
</dbReference>
<dbReference type="InterPro" id="IPR004815">
    <property type="entry name" value="Lon_bac/euk-typ"/>
</dbReference>
<dbReference type="InterPro" id="IPR054594">
    <property type="entry name" value="Lon_lid"/>
</dbReference>
<dbReference type="InterPro" id="IPR008269">
    <property type="entry name" value="Lon_proteolytic"/>
</dbReference>
<dbReference type="InterPro" id="IPR027065">
    <property type="entry name" value="Lon_Prtase"/>
</dbReference>
<dbReference type="InterPro" id="IPR003111">
    <property type="entry name" value="Lon_prtase_N"/>
</dbReference>
<dbReference type="InterPro" id="IPR046336">
    <property type="entry name" value="Lon_prtase_N_sf"/>
</dbReference>
<dbReference type="InterPro" id="IPR027417">
    <property type="entry name" value="P-loop_NTPase"/>
</dbReference>
<dbReference type="InterPro" id="IPR008268">
    <property type="entry name" value="Peptidase_S16_AS"/>
</dbReference>
<dbReference type="InterPro" id="IPR015947">
    <property type="entry name" value="PUA-like_sf"/>
</dbReference>
<dbReference type="InterPro" id="IPR020568">
    <property type="entry name" value="Ribosomal_Su5_D2-typ_SF"/>
</dbReference>
<dbReference type="InterPro" id="IPR014721">
    <property type="entry name" value="Ribsml_uS5_D2-typ_fold_subgr"/>
</dbReference>
<dbReference type="NCBIfam" id="TIGR00763">
    <property type="entry name" value="lon"/>
    <property type="match status" value="1"/>
</dbReference>
<dbReference type="NCBIfam" id="NF008053">
    <property type="entry name" value="PRK10787.1"/>
    <property type="match status" value="1"/>
</dbReference>
<dbReference type="PANTHER" id="PTHR10046">
    <property type="entry name" value="ATP DEPENDENT LON PROTEASE FAMILY MEMBER"/>
    <property type="match status" value="1"/>
</dbReference>
<dbReference type="Pfam" id="PF00004">
    <property type="entry name" value="AAA"/>
    <property type="match status" value="1"/>
</dbReference>
<dbReference type="Pfam" id="PF05362">
    <property type="entry name" value="Lon_C"/>
    <property type="match status" value="1"/>
</dbReference>
<dbReference type="Pfam" id="PF22667">
    <property type="entry name" value="Lon_lid"/>
    <property type="match status" value="1"/>
</dbReference>
<dbReference type="Pfam" id="PF02190">
    <property type="entry name" value="LON_substr_bdg"/>
    <property type="match status" value="1"/>
</dbReference>
<dbReference type="PIRSF" id="PIRSF001174">
    <property type="entry name" value="Lon_proteas"/>
    <property type="match status" value="1"/>
</dbReference>
<dbReference type="PRINTS" id="PR00830">
    <property type="entry name" value="ENDOLAPTASE"/>
</dbReference>
<dbReference type="SMART" id="SM00382">
    <property type="entry name" value="AAA"/>
    <property type="match status" value="1"/>
</dbReference>
<dbReference type="SMART" id="SM00464">
    <property type="entry name" value="LON"/>
    <property type="match status" value="1"/>
</dbReference>
<dbReference type="SUPFAM" id="SSF52540">
    <property type="entry name" value="P-loop containing nucleoside triphosphate hydrolases"/>
    <property type="match status" value="1"/>
</dbReference>
<dbReference type="SUPFAM" id="SSF88697">
    <property type="entry name" value="PUA domain-like"/>
    <property type="match status" value="1"/>
</dbReference>
<dbReference type="SUPFAM" id="SSF54211">
    <property type="entry name" value="Ribosomal protein S5 domain 2-like"/>
    <property type="match status" value="1"/>
</dbReference>
<dbReference type="PROSITE" id="PS51787">
    <property type="entry name" value="LON_N"/>
    <property type="match status" value="1"/>
</dbReference>
<dbReference type="PROSITE" id="PS51786">
    <property type="entry name" value="LON_PROTEOLYTIC"/>
    <property type="match status" value="1"/>
</dbReference>
<dbReference type="PROSITE" id="PS01046">
    <property type="entry name" value="LON_SER"/>
    <property type="match status" value="1"/>
</dbReference>
<feature type="chain" id="PRO_0000396535" description="Lon protease">
    <location>
        <begin position="1"/>
        <end position="856"/>
    </location>
</feature>
<feature type="domain" description="Lon N-terminal" evidence="3">
    <location>
        <begin position="68"/>
        <end position="261"/>
    </location>
</feature>
<feature type="domain" description="Lon proteolytic" evidence="2">
    <location>
        <begin position="647"/>
        <end position="828"/>
    </location>
</feature>
<feature type="active site" evidence="1">
    <location>
        <position position="734"/>
    </location>
</feature>
<feature type="active site" evidence="1">
    <location>
        <position position="777"/>
    </location>
</feature>
<feature type="binding site" evidence="1">
    <location>
        <begin position="412"/>
        <end position="419"/>
    </location>
    <ligand>
        <name>ATP</name>
        <dbReference type="ChEBI" id="CHEBI:30616"/>
    </ligand>
</feature>
<protein>
    <recommendedName>
        <fullName evidence="1">Lon protease</fullName>
        <ecNumber evidence="1">3.4.21.53</ecNumber>
    </recommendedName>
    <alternativeName>
        <fullName evidence="1">ATP-dependent protease La</fullName>
    </alternativeName>
</protein>
<evidence type="ECO:0000255" key="1">
    <source>
        <dbReference type="HAMAP-Rule" id="MF_01973"/>
    </source>
</evidence>
<evidence type="ECO:0000255" key="2">
    <source>
        <dbReference type="PROSITE-ProRule" id="PRU01122"/>
    </source>
</evidence>
<evidence type="ECO:0000255" key="3">
    <source>
        <dbReference type="PROSITE-ProRule" id="PRU01123"/>
    </source>
</evidence>
<keyword id="KW-0067">ATP-binding</keyword>
<keyword id="KW-0963">Cytoplasm</keyword>
<keyword id="KW-0378">Hydrolase</keyword>
<keyword id="KW-0547">Nucleotide-binding</keyword>
<keyword id="KW-0645">Protease</keyword>
<keyword id="KW-1185">Reference proteome</keyword>
<keyword id="KW-0720">Serine protease</keyword>
<keyword id="KW-0346">Stress response</keyword>
<accession>A8HYF7</accession>
<proteinExistence type="inferred from homology"/>
<organism>
    <name type="scientific">Azorhizobium caulinodans (strain ATCC 43989 / DSM 5975 / JCM 20966 / LMG 6465 / NBRC 14845 / NCIMB 13405 / ORS 571)</name>
    <dbReference type="NCBI Taxonomy" id="438753"/>
    <lineage>
        <taxon>Bacteria</taxon>
        <taxon>Pseudomonadati</taxon>
        <taxon>Pseudomonadota</taxon>
        <taxon>Alphaproteobacteria</taxon>
        <taxon>Hyphomicrobiales</taxon>
        <taxon>Xanthobacteraceae</taxon>
        <taxon>Azorhizobium</taxon>
    </lineage>
</organism>
<name>LON_AZOC5</name>